<comment type="function">
    <text evidence="1">Associates with the EF-Tu.GDP complex and induces the exchange of GDP to GTP. It remains bound to the aminoacyl-tRNA.EF-Tu.GTP complex up to the GTP hydrolysis stage on the ribosome.</text>
</comment>
<comment type="subcellular location">
    <subcellularLocation>
        <location evidence="1">Cytoplasm</location>
    </subcellularLocation>
</comment>
<comment type="similarity">
    <text evidence="1">Belongs to the EF-Ts family.</text>
</comment>
<proteinExistence type="inferred from homology"/>
<keyword id="KW-0963">Cytoplasm</keyword>
<keyword id="KW-0251">Elongation factor</keyword>
<keyword id="KW-0648">Protein biosynthesis</keyword>
<reference key="1">
    <citation type="submission" date="2008-04" db="EMBL/GenBank/DDBJ databases">
        <title>Complete sequence of chromosome of Methylobacterium populi BJ001.</title>
        <authorList>
            <consortium name="US DOE Joint Genome Institute"/>
            <person name="Copeland A."/>
            <person name="Lucas S."/>
            <person name="Lapidus A."/>
            <person name="Glavina del Rio T."/>
            <person name="Dalin E."/>
            <person name="Tice H."/>
            <person name="Bruce D."/>
            <person name="Goodwin L."/>
            <person name="Pitluck S."/>
            <person name="Chertkov O."/>
            <person name="Brettin T."/>
            <person name="Detter J.C."/>
            <person name="Han C."/>
            <person name="Kuske C.R."/>
            <person name="Schmutz J."/>
            <person name="Larimer F."/>
            <person name="Land M."/>
            <person name="Hauser L."/>
            <person name="Kyrpides N."/>
            <person name="Mikhailova N."/>
            <person name="Marx C."/>
            <person name="Richardson P."/>
        </authorList>
    </citation>
    <scope>NUCLEOTIDE SEQUENCE [LARGE SCALE GENOMIC DNA]</scope>
    <source>
        <strain>ATCC BAA-705 / NCIMB 13946 / BJ001</strain>
    </source>
</reference>
<name>EFTS_METPB</name>
<organism>
    <name type="scientific">Methylorubrum populi (strain ATCC BAA-705 / NCIMB 13946 / BJ001)</name>
    <name type="common">Methylobacterium populi</name>
    <dbReference type="NCBI Taxonomy" id="441620"/>
    <lineage>
        <taxon>Bacteria</taxon>
        <taxon>Pseudomonadati</taxon>
        <taxon>Pseudomonadota</taxon>
        <taxon>Alphaproteobacteria</taxon>
        <taxon>Hyphomicrobiales</taxon>
        <taxon>Methylobacteriaceae</taxon>
        <taxon>Methylorubrum</taxon>
    </lineage>
</organism>
<dbReference type="EMBL" id="CP001029">
    <property type="protein sequence ID" value="ACB80197.1"/>
    <property type="molecule type" value="Genomic_DNA"/>
</dbReference>
<dbReference type="RefSeq" id="WP_012453941.1">
    <property type="nucleotide sequence ID" value="NC_010725.1"/>
</dbReference>
<dbReference type="SMR" id="B1ZLB6"/>
<dbReference type="STRING" id="441620.Mpop_2034"/>
<dbReference type="KEGG" id="mpo:Mpop_2034"/>
<dbReference type="eggNOG" id="COG0264">
    <property type="taxonomic scope" value="Bacteria"/>
</dbReference>
<dbReference type="HOGENOM" id="CLU_047155_2_0_5"/>
<dbReference type="OrthoDB" id="9808348at2"/>
<dbReference type="Proteomes" id="UP000007136">
    <property type="component" value="Chromosome"/>
</dbReference>
<dbReference type="GO" id="GO:0005737">
    <property type="term" value="C:cytoplasm"/>
    <property type="evidence" value="ECO:0007669"/>
    <property type="project" value="UniProtKB-SubCell"/>
</dbReference>
<dbReference type="GO" id="GO:0003746">
    <property type="term" value="F:translation elongation factor activity"/>
    <property type="evidence" value="ECO:0007669"/>
    <property type="project" value="UniProtKB-UniRule"/>
</dbReference>
<dbReference type="CDD" id="cd14275">
    <property type="entry name" value="UBA_EF-Ts"/>
    <property type="match status" value="1"/>
</dbReference>
<dbReference type="FunFam" id="1.10.8.10:FF:000001">
    <property type="entry name" value="Elongation factor Ts"/>
    <property type="match status" value="1"/>
</dbReference>
<dbReference type="Gene3D" id="1.10.286.20">
    <property type="match status" value="1"/>
</dbReference>
<dbReference type="Gene3D" id="1.10.8.10">
    <property type="entry name" value="DNA helicase RuvA subunit, C-terminal domain"/>
    <property type="match status" value="1"/>
</dbReference>
<dbReference type="Gene3D" id="3.30.479.20">
    <property type="entry name" value="Elongation factor Ts, dimerisation domain"/>
    <property type="match status" value="2"/>
</dbReference>
<dbReference type="HAMAP" id="MF_00050">
    <property type="entry name" value="EF_Ts"/>
    <property type="match status" value="1"/>
</dbReference>
<dbReference type="InterPro" id="IPR036402">
    <property type="entry name" value="EF-Ts_dimer_sf"/>
</dbReference>
<dbReference type="InterPro" id="IPR001816">
    <property type="entry name" value="Transl_elong_EFTs/EF1B"/>
</dbReference>
<dbReference type="InterPro" id="IPR014039">
    <property type="entry name" value="Transl_elong_EFTs/EF1B_dimer"/>
</dbReference>
<dbReference type="InterPro" id="IPR018101">
    <property type="entry name" value="Transl_elong_Ts_CS"/>
</dbReference>
<dbReference type="InterPro" id="IPR009060">
    <property type="entry name" value="UBA-like_sf"/>
</dbReference>
<dbReference type="NCBIfam" id="TIGR00116">
    <property type="entry name" value="tsf"/>
    <property type="match status" value="1"/>
</dbReference>
<dbReference type="PANTHER" id="PTHR11741">
    <property type="entry name" value="ELONGATION FACTOR TS"/>
    <property type="match status" value="1"/>
</dbReference>
<dbReference type="PANTHER" id="PTHR11741:SF0">
    <property type="entry name" value="ELONGATION FACTOR TS, MITOCHONDRIAL"/>
    <property type="match status" value="1"/>
</dbReference>
<dbReference type="Pfam" id="PF00889">
    <property type="entry name" value="EF_TS"/>
    <property type="match status" value="1"/>
</dbReference>
<dbReference type="SUPFAM" id="SSF54713">
    <property type="entry name" value="Elongation factor Ts (EF-Ts), dimerisation domain"/>
    <property type="match status" value="2"/>
</dbReference>
<dbReference type="SUPFAM" id="SSF46934">
    <property type="entry name" value="UBA-like"/>
    <property type="match status" value="1"/>
</dbReference>
<dbReference type="PROSITE" id="PS01127">
    <property type="entry name" value="EF_TS_2"/>
    <property type="match status" value="1"/>
</dbReference>
<sequence>MANITAALVKELREKTGAGMMDCKGALNETNGDLEAAVDWLRKKGLAKAAKKAGRVAAEGLVAVESAGHHAAIVEVNSETDFVARNDGFQAFAREAAKLALNTDGTLEGLQAATFPGSSETVQEKLSNLIATIGENMTLRRVAKLEVSKGVIASYVHGQISEGLGKIGVLVALESEGDVEVLSTLGRQIAMHIAATSPVALDASGVDPAVVERESNILREKNAGKPDHVMAKIVESGLKSYYKEVTLLEQPFVHDGSKTITQVLKEAAGKAGAEVAIKGFIRYALGEGIEKEEGPDFAAEVASMSR</sequence>
<accession>B1ZLB6</accession>
<feature type="chain" id="PRO_1000116759" description="Elongation factor Ts">
    <location>
        <begin position="1"/>
        <end position="306"/>
    </location>
</feature>
<feature type="region of interest" description="Involved in Mg(2+) ion dislocation from EF-Tu" evidence="1">
    <location>
        <begin position="80"/>
        <end position="83"/>
    </location>
</feature>
<protein>
    <recommendedName>
        <fullName evidence="1">Elongation factor Ts</fullName>
        <shortName evidence="1">EF-Ts</shortName>
    </recommendedName>
</protein>
<gene>
    <name evidence="1" type="primary">tsf</name>
    <name type="ordered locus">Mpop_2034</name>
</gene>
<evidence type="ECO:0000255" key="1">
    <source>
        <dbReference type="HAMAP-Rule" id="MF_00050"/>
    </source>
</evidence>